<proteinExistence type="evidence at transcript level"/>
<keyword id="KW-1003">Cell membrane</keyword>
<keyword id="KW-0325">Glycoprotein</keyword>
<keyword id="KW-0406">Ion transport</keyword>
<keyword id="KW-0472">Membrane</keyword>
<keyword id="KW-1185">Reference proteome</keyword>
<keyword id="KW-0812">Transmembrane</keyword>
<keyword id="KW-1133">Transmembrane helix</keyword>
<keyword id="KW-0813">Transport</keyword>
<reference key="1">
    <citation type="submission" date="2004-11" db="EMBL/GenBank/DDBJ databases">
        <authorList>
            <consortium name="The German cDNA consortium"/>
        </authorList>
    </citation>
    <scope>NUCLEOTIDE SEQUENCE [LARGE SCALE MRNA]</scope>
    <source>
        <tissue>Kidney</tissue>
    </source>
</reference>
<feature type="chain" id="PRO_0000320960" description="Solute carrier family 22 member 2">
    <location>
        <begin position="1"/>
        <end position="555"/>
    </location>
</feature>
<feature type="topological domain" description="Cytoplasmic" evidence="4">
    <location>
        <begin position="1"/>
        <end position="21"/>
    </location>
</feature>
<feature type="transmembrane region" description="Helical" evidence="4">
    <location>
        <begin position="22"/>
        <end position="42"/>
    </location>
</feature>
<feature type="topological domain" description="Extracellular" evidence="4">
    <location>
        <begin position="43"/>
        <end position="150"/>
    </location>
</feature>
<feature type="transmembrane region" description="Helical" evidence="4">
    <location>
        <begin position="151"/>
        <end position="171"/>
    </location>
</feature>
<feature type="topological domain" description="Cytoplasmic" evidence="4">
    <location>
        <begin position="172"/>
        <end position="177"/>
    </location>
</feature>
<feature type="transmembrane region" description="Helical" evidence="4">
    <location>
        <begin position="178"/>
        <end position="198"/>
    </location>
</feature>
<feature type="topological domain" description="Extracellular" evidence="4">
    <location>
        <begin position="199"/>
        <end position="210"/>
    </location>
</feature>
<feature type="transmembrane region" description="Helical" evidence="4">
    <location>
        <begin position="211"/>
        <end position="231"/>
    </location>
</feature>
<feature type="topological domain" description="Cytoplasmic" evidence="4">
    <location>
        <begin position="232"/>
        <end position="238"/>
    </location>
</feature>
<feature type="transmembrane region" description="Helical" evidence="4">
    <location>
        <begin position="239"/>
        <end position="259"/>
    </location>
</feature>
<feature type="topological domain" description="Extracellular" evidence="4">
    <location>
        <begin position="260"/>
        <end position="263"/>
    </location>
</feature>
<feature type="transmembrane region" description="Helical" evidence="4">
    <location>
        <begin position="264"/>
        <end position="284"/>
    </location>
</feature>
<feature type="topological domain" description="Cytoplasmic" evidence="4">
    <location>
        <begin position="285"/>
        <end position="348"/>
    </location>
</feature>
<feature type="transmembrane region" description="Helical" evidence="4">
    <location>
        <begin position="349"/>
        <end position="369"/>
    </location>
</feature>
<feature type="topological domain" description="Extracellular" evidence="4">
    <location>
        <begin position="370"/>
        <end position="375"/>
    </location>
</feature>
<feature type="transmembrane region" description="Helical" evidence="4">
    <location>
        <begin position="376"/>
        <end position="396"/>
    </location>
</feature>
<feature type="topological domain" description="Cytoplasmic" evidence="4">
    <location>
        <begin position="397"/>
        <end position="404"/>
    </location>
</feature>
<feature type="transmembrane region" description="Helical" evidence="4">
    <location>
        <begin position="405"/>
        <end position="425"/>
    </location>
</feature>
<feature type="topological domain" description="Extracellular" evidence="4">
    <location>
        <begin position="426"/>
        <end position="432"/>
    </location>
</feature>
<feature type="transmembrane region" description="Helical" evidence="4">
    <location>
        <begin position="433"/>
        <end position="453"/>
    </location>
</feature>
<feature type="topological domain" description="Cytoplasmic" evidence="4">
    <location>
        <begin position="454"/>
        <end position="464"/>
    </location>
</feature>
<feature type="transmembrane region" description="Helical" evidence="4">
    <location>
        <begin position="465"/>
        <end position="485"/>
    </location>
</feature>
<feature type="topological domain" description="Extracellular" evidence="4">
    <location>
        <begin position="486"/>
        <end position="494"/>
    </location>
</feature>
<feature type="transmembrane region" description="Helical" evidence="4">
    <location>
        <begin position="495"/>
        <end position="515"/>
    </location>
</feature>
<feature type="topological domain" description="Cytoplasmic" evidence="4">
    <location>
        <begin position="516"/>
        <end position="555"/>
    </location>
</feature>
<feature type="short sequence motif" description="Proline-rich sequence" evidence="1">
    <location>
        <begin position="284"/>
        <end position="288"/>
    </location>
</feature>
<feature type="glycosylation site" description="N-linked (GlcNAc...) asparagine" evidence="4">
    <location>
        <position position="72"/>
    </location>
</feature>
<gene>
    <name type="primary">SLC22A2</name>
    <name evidence="1" type="synonym">OCT2</name>
</gene>
<comment type="function">
    <text evidence="1 3">Electrogenic voltage-dependent transporter that mediates the transport of a variety of organic cations such as endogenous bioactive amines, cationic drugs and xenobiotics. Functions as a Na(+)-independent, bidirectional uniporter. Cation cellular uptake or release is driven by the electrochemical potential, i.e. membrane potential and concentration gradient (By similarity). However, may also engage electroneutral cation exchange when saturating concentrations of cation substrates are reached (By similarity). Predominantly expressed at the basolateral membrane of hepatocytes and proximal tubules and involved in the uptake and disposition of cationic compounds by hepatic and renal clearance from the blood flow. Implicated in monoamine neurotransmitters uptake such as histamine, dopamine, adrenaline/epinephrine, noradrenaline/norepinephrine, serotonin and tyramine, thereby supporting a physiological role in the central nervous system by regulating interstitial concentrations of neurotransmitters. Also capable of transporting dopaminergic neuromodulators cyclo(his-pro), salsolinol and N-methyl-salsolinol, thereby involved in the maintenance of dopaminergic cell integrity in the central nervous system. Mediates the bidirectional transport of acetylcholine (ACh) at the apical membrane of ciliated cell in airway epithelium, thereby playing a role in luminal release of ACh from bronchial epithelium. Also transports guanidine and endogenous monoamines such as vitamin B1/thiamine, creatinine and N-1-methylnicotinamide (NMN). Mediates the uptake and efflux of quaternary ammonium compound choline. Mediates the bidirectional transport of polyamine agmatine and the uptake of polyamines putrescine and spermidine. Able to transport non-amine endogenous compounds such as prostaglandin E2 (PGE2) and prostaglandin F2-alpha (PGF2-alpha). Also involved in the uptake of xenobiotic 4-(4-(dimethylamino)styryl)-N-methylpyridinium (ASP). May contribute to regulate the transport of organic compounds in testis across the blood-testis-barrier (By similarity).</text>
</comment>
<comment type="catalytic activity">
    <reaction evidence="1">
        <text>(R)-noradrenaline(out) = (R)-noradrenaline(in)</text>
        <dbReference type="Rhea" id="RHEA:73871"/>
        <dbReference type="ChEBI" id="CHEBI:72587"/>
    </reaction>
</comment>
<comment type="catalytic activity">
    <reaction evidence="3">
        <text>(R)-adrenaline(out) = (R)-adrenaline(in)</text>
        <dbReference type="Rhea" id="RHEA:73875"/>
        <dbReference type="ChEBI" id="CHEBI:71406"/>
    </reaction>
</comment>
<comment type="catalytic activity">
    <reaction evidence="1">
        <text>serotonin(out) = serotonin(in)</text>
        <dbReference type="Rhea" id="RHEA:73867"/>
        <dbReference type="ChEBI" id="CHEBI:350546"/>
    </reaction>
</comment>
<comment type="catalytic activity">
    <reaction evidence="1">
        <text>dopamine(out) = dopamine(in)</text>
        <dbReference type="Rhea" id="RHEA:73863"/>
        <dbReference type="ChEBI" id="CHEBI:59905"/>
    </reaction>
</comment>
<comment type="catalytic activity">
    <reaction evidence="1">
        <text>histamine(out) = histamine(in)</text>
        <dbReference type="Rhea" id="RHEA:73879"/>
        <dbReference type="ChEBI" id="CHEBI:58432"/>
    </reaction>
</comment>
<comment type="catalytic activity">
    <reaction evidence="1">
        <text>thiamine(in) = thiamine(out)</text>
        <dbReference type="Rhea" id="RHEA:34919"/>
        <dbReference type="ChEBI" id="CHEBI:18385"/>
    </reaction>
</comment>
<comment type="catalytic activity">
    <reaction evidence="1">
        <text>creatinine(in) = creatinine(out)</text>
        <dbReference type="Rhea" id="RHEA:74539"/>
        <dbReference type="ChEBI" id="CHEBI:16737"/>
    </reaction>
</comment>
<comment type="catalytic activity">
    <reaction evidence="1">
        <text>1-methylnicotinamide(out) = 1-methylnicotinamide(in)</text>
        <dbReference type="Rhea" id="RHEA:73859"/>
        <dbReference type="ChEBI" id="CHEBI:16797"/>
    </reaction>
</comment>
<comment type="catalytic activity">
    <reaction evidence="1">
        <text>guanidine(out) = guanidine(in)</text>
        <dbReference type="Rhea" id="RHEA:73883"/>
        <dbReference type="ChEBI" id="CHEBI:30087"/>
    </reaction>
</comment>
<comment type="catalytic activity">
    <reaction evidence="1">
        <text>choline(out) = choline(in)</text>
        <dbReference type="Rhea" id="RHEA:32751"/>
        <dbReference type="ChEBI" id="CHEBI:15354"/>
    </reaction>
</comment>
<comment type="catalytic activity">
    <reaction evidence="1">
        <text>agmatine(out) = agmatine(in)</text>
        <dbReference type="Rhea" id="RHEA:72131"/>
        <dbReference type="ChEBI" id="CHEBI:58145"/>
    </reaction>
    <physiologicalReaction direction="left-to-right" evidence="1">
        <dbReference type="Rhea" id="RHEA:72132"/>
    </physiologicalReaction>
    <physiologicalReaction direction="right-to-left" evidence="1">
        <dbReference type="Rhea" id="RHEA:72133"/>
    </physiologicalReaction>
</comment>
<comment type="catalytic activity">
    <reaction evidence="1">
        <text>putrescine(out) = putrescine(in)</text>
        <dbReference type="Rhea" id="RHEA:72135"/>
        <dbReference type="ChEBI" id="CHEBI:326268"/>
    </reaction>
</comment>
<comment type="catalytic activity">
    <reaction evidence="2">
        <text>spermidine(in) = spermidine(out)</text>
        <dbReference type="Rhea" id="RHEA:35039"/>
        <dbReference type="ChEBI" id="CHEBI:57834"/>
    </reaction>
</comment>
<comment type="catalytic activity">
    <reaction evidence="1">
        <text>tyramine(in) = tyramine(out)</text>
        <dbReference type="Rhea" id="RHEA:74783"/>
        <dbReference type="ChEBI" id="CHEBI:327995"/>
    </reaction>
</comment>
<comment type="catalytic activity">
    <reaction evidence="1">
        <text>L-histidyl-L-proline diketopiperazine(in) = L-histidyl-L-proline diketopiperazine(out)</text>
        <dbReference type="Rhea" id="RHEA:74787"/>
        <dbReference type="ChEBI" id="CHEBI:90039"/>
    </reaction>
</comment>
<comment type="catalytic activity">
    <reaction evidence="1">
        <text>(R)-salsolinol(in) = (R)-salsolinol(out)</text>
        <dbReference type="Rhea" id="RHEA:74791"/>
        <dbReference type="ChEBI" id="CHEBI:194082"/>
    </reaction>
</comment>
<comment type="catalytic activity">
    <reaction evidence="1">
        <text>N-methyl-(R)-salsolinol(in) = N-methyl-(R)-salsolinol(out)</text>
        <dbReference type="Rhea" id="RHEA:74795"/>
        <dbReference type="ChEBI" id="CHEBI:194083"/>
    </reaction>
</comment>
<comment type="catalytic activity">
    <reaction evidence="1">
        <text>acetylcholine(in) = acetylcholine(out)</text>
        <dbReference type="Rhea" id="RHEA:74663"/>
        <dbReference type="ChEBI" id="CHEBI:15355"/>
    </reaction>
</comment>
<comment type="catalytic activity">
    <reaction evidence="1">
        <text>prostaglandin F2alpha(out) = prostaglandin F2alpha(in)</text>
        <dbReference type="Rhea" id="RHEA:50988"/>
        <dbReference type="ChEBI" id="CHEBI:57404"/>
    </reaction>
</comment>
<comment type="catalytic activity">
    <reaction evidence="1">
        <text>prostaglandin E2(out) = prostaglandin E2(in)</text>
        <dbReference type="Rhea" id="RHEA:50984"/>
        <dbReference type="ChEBI" id="CHEBI:606564"/>
    </reaction>
</comment>
<comment type="activity regulation">
    <text evidence="1">Tyrosine phosphorylation of the transporter leads to activation of the transport activity. Inhibited by cGMP, most likely through a cGMP-binding protein that interacts with OCT2.</text>
</comment>
<comment type="subcellular location">
    <subcellularLocation>
        <location evidence="3">Basolateral cell membrane</location>
        <topology evidence="5">Multi-pass membrane protein</topology>
    </subcellularLocation>
    <subcellularLocation>
        <location evidence="1">Basal cell membrane</location>
        <topology evidence="5">Multi-pass membrane protein</topology>
    </subcellularLocation>
    <subcellularLocation>
        <location evidence="1">Apical cell membrane</location>
        <topology evidence="5">Multi-pass membrane protein</topology>
    </subcellularLocation>
</comment>
<comment type="domain">
    <text evidence="1">Contains one proline-rich sequence (Pro-Glu-Ser-Pro-Arg) that may be involved in tyrosine-protein kinase YES1 binding and is required for the activation of substrate transport.</text>
</comment>
<comment type="PTM">
    <text evidence="1">Tyrosine phosphorylated.</text>
</comment>
<comment type="miscellaneous">
    <text evidence="1 3">Mediates the renal secretion of many clinically used cationic drugs. Transports drugs such as diabetes treatment medicine metformin and neurotoxins 1-methyl-4-phenylpyridinium (MPP(+)), famotidine, ranitidine, amantadine, acriflavine, amiloride, memantine, cimetidine, cisplatin, oxaliplatin, platinum-based drugs cisplatin and oxaliplatin, 3'-azido-3'-deoxythymidine (AZT) and tetraethylammonium (TEA). Mediates the bidirectional transport of MPP(+). Metformin competitively inhibits OCT1-mediated thiamine uptake, leading to a decrease in hepatic steatosis. Plays a predominant role in the anticancer activity of cisplatin and oxaliplatin and may contribute to antitumor specificity (By similarity). Involved in cisplatin-induced nephrotoxicity (By similarity).</text>
</comment>
<comment type="similarity">
    <text evidence="5">Belongs to the major facilitator (TC 2.A.1) superfamily. Organic cation transporter (TC 2.A.1.19) family.</text>
</comment>
<comment type="caution">
    <text evidence="1">While most authors have deduced a localization at the basolateral membrane of proximal tubules, other studies demonstrated a localization to the luminal membrane in the distal tubule.</text>
</comment>
<accession>Q5R5H7</accession>
<sequence length="555" mass="62424">MPTTVDDVLEHGGEFHFFQKQMFFLLALLSATFTPIYVGIVFLGFTPDHRCRSPGVAELSLRCGWSPAEELNYTVPGPGPAGEASPRQCGRYEVDWNQSAFGCVDPLASLDTNRSRLPLGPCREGWVYETPGSSIVTEFNLVCANSWMLDLFQASVNVGFFFGSVSIGYIADRFGRKLCLLTTVLINAAAGVLMAISPTYTWMLIFRLIQGLVSKAGWLIGYILITEFVGRRYRRTVGIFYQVAYTVGLLVLAGVAYALPHWRWLQFTVTLPNFFFLLYYWCIPESPRWLISQNKNAEAMRIIKHIAKKNGKSLPASLQCLRLEEETGEKLNPSFLDLVRTPQIRKHTMILMYNWFTSSVLYQGLIMHMGLAGDNIYLDFFYSALVEFPAAFMIIVTIDRIGRRYPWAASNMVAGAACLASVFIPGDLQWLKIIISCLGRMGITMAYEIVRLVNAELYPTFIRNLGVHICSSMCDIGGIITPFLVYRLTNIWLELPLMVFGVLGLVAGGLVLLLPETKGKALPETIEEAENMQRPRKNKEKMIYLQVQKLDIPLN</sequence>
<organism>
    <name type="scientific">Pongo abelii</name>
    <name type="common">Sumatran orangutan</name>
    <name type="synonym">Pongo pygmaeus abelii</name>
    <dbReference type="NCBI Taxonomy" id="9601"/>
    <lineage>
        <taxon>Eukaryota</taxon>
        <taxon>Metazoa</taxon>
        <taxon>Chordata</taxon>
        <taxon>Craniata</taxon>
        <taxon>Vertebrata</taxon>
        <taxon>Euteleostomi</taxon>
        <taxon>Mammalia</taxon>
        <taxon>Eutheria</taxon>
        <taxon>Euarchontoglires</taxon>
        <taxon>Primates</taxon>
        <taxon>Haplorrhini</taxon>
        <taxon>Catarrhini</taxon>
        <taxon>Hominidae</taxon>
        <taxon>Pongo</taxon>
    </lineage>
</organism>
<name>S22A2_PONAB</name>
<evidence type="ECO:0000250" key="1">
    <source>
        <dbReference type="UniProtKB" id="O15244"/>
    </source>
</evidence>
<evidence type="ECO:0000250" key="2">
    <source>
        <dbReference type="UniProtKB" id="O70577"/>
    </source>
</evidence>
<evidence type="ECO:0000250" key="3">
    <source>
        <dbReference type="UniProtKB" id="Q9R0W2"/>
    </source>
</evidence>
<evidence type="ECO:0000255" key="4"/>
<evidence type="ECO:0000305" key="5"/>
<dbReference type="EMBL" id="CR860882">
    <property type="protein sequence ID" value="CAH92989.1"/>
    <property type="molecule type" value="mRNA"/>
</dbReference>
<dbReference type="RefSeq" id="NP_001126767.1">
    <property type="nucleotide sequence ID" value="NM_001133295.1"/>
</dbReference>
<dbReference type="SMR" id="Q5R5H7"/>
<dbReference type="FunCoup" id="Q5R5H7">
    <property type="interactions" value="143"/>
</dbReference>
<dbReference type="STRING" id="9601.ENSPPYP00000019208"/>
<dbReference type="GlyCosmos" id="Q5R5H7">
    <property type="glycosylation" value="1 site, No reported glycans"/>
</dbReference>
<dbReference type="GeneID" id="100173770"/>
<dbReference type="KEGG" id="pon:100173770"/>
<dbReference type="CTD" id="6582"/>
<dbReference type="eggNOG" id="KOG0255">
    <property type="taxonomic scope" value="Eukaryota"/>
</dbReference>
<dbReference type="InParanoid" id="Q5R5H7"/>
<dbReference type="OrthoDB" id="5141738at2759"/>
<dbReference type="Proteomes" id="UP000001595">
    <property type="component" value="Unplaced"/>
</dbReference>
<dbReference type="GO" id="GO:0016324">
    <property type="term" value="C:apical plasma membrane"/>
    <property type="evidence" value="ECO:0000250"/>
    <property type="project" value="UniProtKB"/>
</dbReference>
<dbReference type="GO" id="GO:0009925">
    <property type="term" value="C:basal plasma membrane"/>
    <property type="evidence" value="ECO:0000250"/>
    <property type="project" value="UniProtKB"/>
</dbReference>
<dbReference type="GO" id="GO:0016323">
    <property type="term" value="C:basolateral plasma membrane"/>
    <property type="evidence" value="ECO:0000250"/>
    <property type="project" value="UniProtKB"/>
</dbReference>
<dbReference type="GO" id="GO:0005277">
    <property type="term" value="F:acetylcholine transmembrane transporter activity"/>
    <property type="evidence" value="ECO:0000250"/>
    <property type="project" value="UniProtKB"/>
</dbReference>
<dbReference type="GO" id="GO:0008504">
    <property type="term" value="F:monoamine transmembrane transporter activity"/>
    <property type="evidence" value="ECO:0000250"/>
    <property type="project" value="UniProtKB"/>
</dbReference>
<dbReference type="GO" id="GO:0005326">
    <property type="term" value="F:neurotransmitter transmembrane transporter activity"/>
    <property type="evidence" value="ECO:0000250"/>
    <property type="project" value="UniProtKB"/>
</dbReference>
<dbReference type="GO" id="GO:0008514">
    <property type="term" value="F:organic anion transmembrane transporter activity"/>
    <property type="evidence" value="ECO:0000250"/>
    <property type="project" value="UniProtKB"/>
</dbReference>
<dbReference type="GO" id="GO:0015101">
    <property type="term" value="F:organic cation transmembrane transporter activity"/>
    <property type="evidence" value="ECO:0000250"/>
    <property type="project" value="UniProtKB"/>
</dbReference>
<dbReference type="GO" id="GO:0015132">
    <property type="term" value="F:prostaglandin transmembrane transporter activity"/>
    <property type="evidence" value="ECO:0000250"/>
    <property type="project" value="UniProtKB"/>
</dbReference>
<dbReference type="GO" id="GO:0015489">
    <property type="term" value="F:putrescine transmembrane transporter activity"/>
    <property type="evidence" value="ECO:0000250"/>
    <property type="project" value="UniProtKB"/>
</dbReference>
<dbReference type="GO" id="GO:0015651">
    <property type="term" value="F:quaternary ammonium group transmembrane transporter activity"/>
    <property type="evidence" value="ECO:0000250"/>
    <property type="project" value="UniProtKB"/>
</dbReference>
<dbReference type="GO" id="GO:0015606">
    <property type="term" value="F:spermidine transmembrane transporter activity"/>
    <property type="evidence" value="ECO:0000250"/>
    <property type="project" value="UniProtKB"/>
</dbReference>
<dbReference type="GO" id="GO:0015234">
    <property type="term" value="F:thiamine transmembrane transporter activity"/>
    <property type="evidence" value="ECO:0000250"/>
    <property type="project" value="UniProtKB"/>
</dbReference>
<dbReference type="GO" id="GO:0042910">
    <property type="term" value="F:xenobiotic transmembrane transporter activity"/>
    <property type="evidence" value="ECO:0000250"/>
    <property type="project" value="UniProtKB"/>
</dbReference>
<dbReference type="GO" id="GO:0015870">
    <property type="term" value="P:acetylcholine transport"/>
    <property type="evidence" value="ECO:0000250"/>
    <property type="project" value="UniProtKB"/>
</dbReference>
<dbReference type="GO" id="GO:0015872">
    <property type="term" value="P:dopamine transport"/>
    <property type="evidence" value="ECO:0000250"/>
    <property type="project" value="UniProtKB"/>
</dbReference>
<dbReference type="GO" id="GO:0048241">
    <property type="term" value="P:epinephrine transport"/>
    <property type="evidence" value="ECO:0000250"/>
    <property type="project" value="UniProtKB"/>
</dbReference>
<dbReference type="GO" id="GO:0051608">
    <property type="term" value="P:histamine transport"/>
    <property type="evidence" value="ECO:0000250"/>
    <property type="project" value="UniProtKB"/>
</dbReference>
<dbReference type="GO" id="GO:0006811">
    <property type="term" value="P:monoatomic ion transport"/>
    <property type="evidence" value="ECO:0007669"/>
    <property type="project" value="UniProtKB-KW"/>
</dbReference>
<dbReference type="GO" id="GO:0015874">
    <property type="term" value="P:norepinephrine transport"/>
    <property type="evidence" value="ECO:0000250"/>
    <property type="project" value="UniProtKB"/>
</dbReference>
<dbReference type="GO" id="GO:0015732">
    <property type="term" value="P:prostaglandin transport"/>
    <property type="evidence" value="ECO:0000250"/>
    <property type="project" value="UniProtKB"/>
</dbReference>
<dbReference type="GO" id="GO:0015847">
    <property type="term" value="P:putrescine transport"/>
    <property type="evidence" value="ECO:0000250"/>
    <property type="project" value="UniProtKB"/>
</dbReference>
<dbReference type="GO" id="GO:0006837">
    <property type="term" value="P:serotonin transport"/>
    <property type="evidence" value="ECO:0000250"/>
    <property type="project" value="UniProtKB"/>
</dbReference>
<dbReference type="GO" id="GO:0015848">
    <property type="term" value="P:spermidine transport"/>
    <property type="evidence" value="ECO:0000250"/>
    <property type="project" value="UniProtKB"/>
</dbReference>
<dbReference type="GO" id="GO:0071934">
    <property type="term" value="P:thiamine transmembrane transport"/>
    <property type="evidence" value="ECO:0000250"/>
    <property type="project" value="UniProtKB"/>
</dbReference>
<dbReference type="CDD" id="cd17379">
    <property type="entry name" value="MFS_SLC22A1_2_3"/>
    <property type="match status" value="1"/>
</dbReference>
<dbReference type="FunFam" id="1.20.1250.20:FF:000148">
    <property type="entry name" value="Solute carrier family 22 member 2"/>
    <property type="match status" value="1"/>
</dbReference>
<dbReference type="Gene3D" id="1.20.1250.20">
    <property type="entry name" value="MFS general substrate transporter like domains"/>
    <property type="match status" value="1"/>
</dbReference>
<dbReference type="InterPro" id="IPR020846">
    <property type="entry name" value="MFS_dom"/>
</dbReference>
<dbReference type="InterPro" id="IPR005828">
    <property type="entry name" value="MFS_sugar_transport-like"/>
</dbReference>
<dbReference type="InterPro" id="IPR036259">
    <property type="entry name" value="MFS_trans_sf"/>
</dbReference>
<dbReference type="InterPro" id="IPR004749">
    <property type="entry name" value="Orgcat_transp/SVOP"/>
</dbReference>
<dbReference type="InterPro" id="IPR005829">
    <property type="entry name" value="Sugar_transporter_CS"/>
</dbReference>
<dbReference type="NCBIfam" id="TIGR00898">
    <property type="entry name" value="2A0119"/>
    <property type="match status" value="1"/>
</dbReference>
<dbReference type="PANTHER" id="PTHR24064">
    <property type="entry name" value="SOLUTE CARRIER FAMILY 22 MEMBER"/>
    <property type="match status" value="1"/>
</dbReference>
<dbReference type="Pfam" id="PF00083">
    <property type="entry name" value="Sugar_tr"/>
    <property type="match status" value="1"/>
</dbReference>
<dbReference type="SUPFAM" id="SSF103473">
    <property type="entry name" value="MFS general substrate transporter"/>
    <property type="match status" value="1"/>
</dbReference>
<dbReference type="PROSITE" id="PS50850">
    <property type="entry name" value="MFS"/>
    <property type="match status" value="1"/>
</dbReference>
<dbReference type="PROSITE" id="PS00216">
    <property type="entry name" value="SUGAR_TRANSPORT_1"/>
    <property type="match status" value="2"/>
</dbReference>
<protein>
    <recommendedName>
        <fullName evidence="1">Solute carrier family 22 member 2</fullName>
    </recommendedName>
    <alternativeName>
        <fullName evidence="1">Organic cation transporter 2</fullName>
    </alternativeName>
</protein>